<feature type="chain" id="PRO_0000450547" description="Palmitoyltransferase ZDHHC8B">
    <location>
        <begin position="1"/>
        <end position="751"/>
    </location>
</feature>
<feature type="topological domain" description="Cytoplasmic" evidence="12">
    <location>
        <begin position="1"/>
        <end position="13"/>
    </location>
</feature>
<feature type="transmembrane region" description="Helical" evidence="4">
    <location>
        <begin position="14"/>
        <end position="34"/>
    </location>
</feature>
<feature type="topological domain" description="Extracellular" evidence="12">
    <location>
        <begin position="35"/>
        <end position="41"/>
    </location>
</feature>
<feature type="transmembrane region" description="Helical" evidence="4">
    <location>
        <begin position="42"/>
        <end position="62"/>
    </location>
</feature>
<feature type="topological domain" description="Cytoplasmic" evidence="12">
    <location>
        <begin position="63"/>
        <end position="148"/>
    </location>
</feature>
<feature type="transmembrane region" description="Helical" evidence="4">
    <location>
        <begin position="149"/>
        <end position="169"/>
    </location>
</feature>
<feature type="topological domain" description="Extracellular" evidence="12">
    <location>
        <begin position="170"/>
        <end position="185"/>
    </location>
</feature>
<feature type="transmembrane region" description="Helical" evidence="4">
    <location>
        <begin position="186"/>
        <end position="206"/>
    </location>
</feature>
<feature type="topological domain" description="Cytoplasmic" evidence="12">
    <location>
        <begin position="207"/>
        <end position="751"/>
    </location>
</feature>
<feature type="domain" description="DHHC" evidence="5">
    <location>
        <begin position="104"/>
        <end position="154"/>
    </location>
</feature>
<feature type="region of interest" description="Disordered" evidence="6">
    <location>
        <begin position="293"/>
        <end position="346"/>
    </location>
</feature>
<feature type="region of interest" description="Disordered" evidence="6">
    <location>
        <begin position="437"/>
        <end position="461"/>
    </location>
</feature>
<feature type="region of interest" description="Disordered" evidence="6">
    <location>
        <begin position="633"/>
        <end position="659"/>
    </location>
</feature>
<feature type="region of interest" description="Disordered" evidence="6">
    <location>
        <begin position="666"/>
        <end position="685"/>
    </location>
</feature>
<feature type="region of interest" description="Disordered" evidence="6">
    <location>
        <begin position="703"/>
        <end position="736"/>
    </location>
</feature>
<feature type="compositionally biased region" description="Low complexity" evidence="6">
    <location>
        <begin position="326"/>
        <end position="338"/>
    </location>
</feature>
<feature type="compositionally biased region" description="Polar residues" evidence="6">
    <location>
        <begin position="633"/>
        <end position="651"/>
    </location>
</feature>
<feature type="compositionally biased region" description="Polar residues" evidence="6">
    <location>
        <begin position="669"/>
        <end position="681"/>
    </location>
</feature>
<feature type="compositionally biased region" description="Polar residues" evidence="6">
    <location>
        <begin position="724"/>
        <end position="733"/>
    </location>
</feature>
<feature type="active site" description="S-palmitoyl cysteine intermediate" evidence="5">
    <location>
        <position position="134"/>
    </location>
</feature>
<feature type="sequence conflict" description="In Ref. 4; AAH49439 and 2; AAX68544." evidence="12" ref="4 2">
    <original>V</original>
    <variation>M</variation>
    <location>
        <position position="171"/>
    </location>
</feature>
<feature type="sequence conflict" description="In Ref. 1; BAC24796." evidence="12" ref="1">
    <original>L</original>
    <variation>I</variation>
    <location>
        <position position="405"/>
    </location>
</feature>
<reference key="1">
    <citation type="journal article" date="2002" name="Mech. Dev.">
        <title>Expression of zisp, a DHHC zinc finger gene, in somites and lens during zebrafish embryogenesis.</title>
        <authorList>
            <person name="Nagaya M."/>
            <person name="Inohaya K."/>
            <person name="Imai Y."/>
            <person name="Kudo A."/>
        </authorList>
    </citation>
    <scope>NUCLEOTIDE SEQUENCE [MRNA]</scope>
    <scope>DEVELOPMENTAL STAGE</scope>
</reference>
<reference key="2">
    <citation type="submission" date="2004-12" db="EMBL/GenBank/DDBJ databases">
        <title>A superfamily of membrane-associated DHHC type zinc finger proteins.</title>
        <authorList>
            <person name="Chen Y."/>
            <person name="Huang C.-H."/>
        </authorList>
    </citation>
    <scope>NUCLEOTIDE SEQUENCE [MRNA]</scope>
</reference>
<reference key="3">
    <citation type="journal article" date="2013" name="Nature">
        <title>The zebrafish reference genome sequence and its relationship to the human genome.</title>
        <authorList>
            <person name="Howe K."/>
            <person name="Clark M.D."/>
            <person name="Torroja C.F."/>
            <person name="Torrance J."/>
            <person name="Berthelot C."/>
            <person name="Muffato M."/>
            <person name="Collins J.E."/>
            <person name="Humphray S."/>
            <person name="McLaren K."/>
            <person name="Matthews L."/>
            <person name="McLaren S."/>
            <person name="Sealy I."/>
            <person name="Caccamo M."/>
            <person name="Churcher C."/>
            <person name="Scott C."/>
            <person name="Barrett J.C."/>
            <person name="Koch R."/>
            <person name="Rauch G.J."/>
            <person name="White S."/>
            <person name="Chow W."/>
            <person name="Kilian B."/>
            <person name="Quintais L.T."/>
            <person name="Guerra-Assuncao J.A."/>
            <person name="Zhou Y."/>
            <person name="Gu Y."/>
            <person name="Yen J."/>
            <person name="Vogel J.H."/>
            <person name="Eyre T."/>
            <person name="Redmond S."/>
            <person name="Banerjee R."/>
            <person name="Chi J."/>
            <person name="Fu B."/>
            <person name="Langley E."/>
            <person name="Maguire S.F."/>
            <person name="Laird G.K."/>
            <person name="Lloyd D."/>
            <person name="Kenyon E."/>
            <person name="Donaldson S."/>
            <person name="Sehra H."/>
            <person name="Almeida-King J."/>
            <person name="Loveland J."/>
            <person name="Trevanion S."/>
            <person name="Jones M."/>
            <person name="Quail M."/>
            <person name="Willey D."/>
            <person name="Hunt A."/>
            <person name="Burton J."/>
            <person name="Sims S."/>
            <person name="McLay K."/>
            <person name="Plumb B."/>
            <person name="Davis J."/>
            <person name="Clee C."/>
            <person name="Oliver K."/>
            <person name="Clark R."/>
            <person name="Riddle C."/>
            <person name="Elliot D."/>
            <person name="Threadgold G."/>
            <person name="Harden G."/>
            <person name="Ware D."/>
            <person name="Begum S."/>
            <person name="Mortimore B."/>
            <person name="Kerry G."/>
            <person name="Heath P."/>
            <person name="Phillimore B."/>
            <person name="Tracey A."/>
            <person name="Corby N."/>
            <person name="Dunn M."/>
            <person name="Johnson C."/>
            <person name="Wood J."/>
            <person name="Clark S."/>
            <person name="Pelan S."/>
            <person name="Griffiths G."/>
            <person name="Smith M."/>
            <person name="Glithero R."/>
            <person name="Howden P."/>
            <person name="Barker N."/>
            <person name="Lloyd C."/>
            <person name="Stevens C."/>
            <person name="Harley J."/>
            <person name="Holt K."/>
            <person name="Panagiotidis G."/>
            <person name="Lovell J."/>
            <person name="Beasley H."/>
            <person name="Henderson C."/>
            <person name="Gordon D."/>
            <person name="Auger K."/>
            <person name="Wright D."/>
            <person name="Collins J."/>
            <person name="Raisen C."/>
            <person name="Dyer L."/>
            <person name="Leung K."/>
            <person name="Robertson L."/>
            <person name="Ambridge K."/>
            <person name="Leongamornlert D."/>
            <person name="McGuire S."/>
            <person name="Gilderthorp R."/>
            <person name="Griffiths C."/>
            <person name="Manthravadi D."/>
            <person name="Nichol S."/>
            <person name="Barker G."/>
            <person name="Whitehead S."/>
            <person name="Kay M."/>
            <person name="Brown J."/>
            <person name="Murnane C."/>
            <person name="Gray E."/>
            <person name="Humphries M."/>
            <person name="Sycamore N."/>
            <person name="Barker D."/>
            <person name="Saunders D."/>
            <person name="Wallis J."/>
            <person name="Babbage A."/>
            <person name="Hammond S."/>
            <person name="Mashreghi-Mohammadi M."/>
            <person name="Barr L."/>
            <person name="Martin S."/>
            <person name="Wray P."/>
            <person name="Ellington A."/>
            <person name="Matthews N."/>
            <person name="Ellwood M."/>
            <person name="Woodmansey R."/>
            <person name="Clark G."/>
            <person name="Cooper J."/>
            <person name="Tromans A."/>
            <person name="Grafham D."/>
            <person name="Skuce C."/>
            <person name="Pandian R."/>
            <person name="Andrews R."/>
            <person name="Harrison E."/>
            <person name="Kimberley A."/>
            <person name="Garnett J."/>
            <person name="Fosker N."/>
            <person name="Hall R."/>
            <person name="Garner P."/>
            <person name="Kelly D."/>
            <person name="Bird C."/>
            <person name="Palmer S."/>
            <person name="Gehring I."/>
            <person name="Berger A."/>
            <person name="Dooley C.M."/>
            <person name="Ersan-Urun Z."/>
            <person name="Eser C."/>
            <person name="Geiger H."/>
            <person name="Geisler M."/>
            <person name="Karotki L."/>
            <person name="Kirn A."/>
            <person name="Konantz J."/>
            <person name="Konantz M."/>
            <person name="Oberlander M."/>
            <person name="Rudolph-Geiger S."/>
            <person name="Teucke M."/>
            <person name="Lanz C."/>
            <person name="Raddatz G."/>
            <person name="Osoegawa K."/>
            <person name="Zhu B."/>
            <person name="Rapp A."/>
            <person name="Widaa S."/>
            <person name="Langford C."/>
            <person name="Yang F."/>
            <person name="Schuster S.C."/>
            <person name="Carter N.P."/>
            <person name="Harrow J."/>
            <person name="Ning Z."/>
            <person name="Herrero J."/>
            <person name="Searle S.M."/>
            <person name="Enright A."/>
            <person name="Geisler R."/>
            <person name="Plasterk R.H."/>
            <person name="Lee C."/>
            <person name="Westerfield M."/>
            <person name="de Jong P.J."/>
            <person name="Zon L.I."/>
            <person name="Postlethwait J.H."/>
            <person name="Nusslein-Volhard C."/>
            <person name="Hubbard T.J."/>
            <person name="Roest Crollius H."/>
            <person name="Rogers J."/>
            <person name="Stemple D.L."/>
        </authorList>
    </citation>
    <scope>NUCLEOTIDE SEQUENCE [LARGE SCALE GENOMIC DNA]</scope>
    <source>
        <strain>Tuebingen</strain>
    </source>
</reference>
<reference key="4">
    <citation type="submission" date="2003-03" db="EMBL/GenBank/DDBJ databases">
        <authorList>
            <consortium name="NIH - Zebrafish Gene Collection (ZGC) project"/>
        </authorList>
    </citation>
    <scope>NUCLEOTIDE SEQUENCE [LARGE SCALE MRNA]</scope>
    <source>
        <tissue>Embryo</tissue>
    </source>
</reference>
<reference key="5">
    <citation type="journal article" date="2015" name="Neurotoxicol. Teratol.">
        <title>2-Bromopalmitate impairs neural stem/progenitor cell proliferation, promotes cell apoptosis and induces malformation in zebrafish embryonic brain.</title>
        <authorList>
            <person name="Wang C."/>
            <person name="Chen X."/>
            <person name="Shi W."/>
            <person name="Wang F."/>
            <person name="Du Z."/>
            <person name="Li X."/>
            <person name="Yao Y."/>
            <person name="Liu T."/>
            <person name="Shao T."/>
            <person name="Li G."/>
            <person name="Hao A."/>
        </authorList>
    </citation>
    <scope>DEVELOPMENTAL STAGE</scope>
</reference>
<reference key="6">
    <citation type="journal article" date="2016" name="Biochem. Biophys. Res. Commun.">
        <title>Protein palmitoylation activate zygotic gene expression during the maternal-to-zygotic transition.</title>
        <authorList>
            <person name="Du Z."/>
            <person name="Chen X."/>
            <person name="Li X."/>
            <person name="He K."/>
            <person name="Ji S."/>
            <person name="Shi W."/>
            <person name="Hao A."/>
        </authorList>
    </citation>
    <scope>DEVELOPMENTAL STAGE</scope>
</reference>
<keyword id="KW-0012">Acyltransferase</keyword>
<keyword id="KW-0333">Golgi apparatus</keyword>
<keyword id="KW-0449">Lipoprotein</keyword>
<keyword id="KW-0472">Membrane</keyword>
<keyword id="KW-0496">Mitochondrion</keyword>
<keyword id="KW-0564">Palmitate</keyword>
<keyword id="KW-1185">Reference proteome</keyword>
<keyword id="KW-0808">Transferase</keyword>
<keyword id="KW-0812">Transmembrane</keyword>
<keyword id="KW-1133">Transmembrane helix</keyword>
<sequence length="751" mass="82852">MPNSVGKRFKPTKYIPVSTAATLLVGSTTLFFVFTCPWLTKAVSPVVPLYNGIVFLFVLANFSMATFMDPGVFPRADEDEDKDDDFRAPLYKNVEIKGIQVRMKWCATCHFYRPPRCSHCSVCDNCVEEFDHHCPWVNNCIGRRNYRYFFLFLLSLSVHMVGVFSFGLLFVLHHLETLSALHTTVTLVVMCVTGLFFIPVMGLTGFHMVLVARGRTTNEQVTGKFRGGVNPFTRGCGGNVKHVLCSPLAPRYIADPRKKIPVTVTPPFLRPDLSNRHISVKVSDNGIHSNILRSKSKTSLNGMDDKSIDAQPPLPPKADRYNQIKSQLTSSEESSLSSKPTNPSTPAMFKYRPSFGTMPKVHYHATGEKIVMCENGNPSAVLEERSHDYRSEPNLDLPDYRSAPLHRTYQSSPFQLDSFSTTSRSFSLKQGVNRADCTPLGGTKHETITSTPHRGVFSPGTLSGRNSSLSYDSLLTPSVAPSIGECAAHPGVPSMGFHSPYLPTKMCHVRGPELQRHAGPPSYSPVHIGAMYGRQSPLSRERERDPSPVRYDNLSKTIMASIQERKEFEEREKLMHRHVQGYANDSGVFDTAYGLPHGYPDGPRGPASREPTPPVCASRDNLMGYPPRTPVLRSSASSLVRAPRTSTTSLHTDGGGMNRTAELQYRSPVHQSHQSPTSVPRSPSYAHQKVAFISALERADSPHLGTREDIGQGKVNGQLKGQYGTPSGTPSRHTSVKKVTGVGGTTYEISV</sequence>
<comment type="function">
    <text evidence="3">Palmitoyltransferase that catalyzes the addition of palmitate onto various protein substrates and therefore function in several unrelated biological processes.</text>
</comment>
<comment type="catalytic activity">
    <reaction evidence="3">
        <text>L-cysteinyl-[protein] + hexadecanoyl-CoA = S-hexadecanoyl-L-cysteinyl-[protein] + CoA</text>
        <dbReference type="Rhea" id="RHEA:36683"/>
        <dbReference type="Rhea" id="RHEA-COMP:10131"/>
        <dbReference type="Rhea" id="RHEA-COMP:11032"/>
        <dbReference type="ChEBI" id="CHEBI:29950"/>
        <dbReference type="ChEBI" id="CHEBI:57287"/>
        <dbReference type="ChEBI" id="CHEBI:57379"/>
        <dbReference type="ChEBI" id="CHEBI:74151"/>
        <dbReference type="EC" id="2.3.1.225"/>
    </reaction>
    <physiologicalReaction direction="left-to-right" evidence="3">
        <dbReference type="Rhea" id="RHEA:36684"/>
    </physiologicalReaction>
</comment>
<comment type="subcellular location">
    <subcellularLocation>
        <location evidence="3">Golgi apparatus membrane</location>
        <topology evidence="4">Multi-pass membrane protein</topology>
    </subcellularLocation>
    <subcellularLocation>
        <location evidence="1">Mitochondrion membrane</location>
        <topology evidence="4">Multi-pass membrane protein</topology>
    </subcellularLocation>
</comment>
<comment type="developmental stage">
    <text evidence="7 8 9">First detected at 2.75 hours post-fertilization/hpf (PubMed:27235108). The expression increases at least till 24 hpf (PubMed:26056731). During the segmentation period expressed in the adaxial cells and the somites in a striping pattern (PubMed:14516702). By 24 hpf, expression in the somites decreases except in the tail region. In addition expression is also detected in lens placode and lens fiber cell from 18 hpf till 48 hpf and then decreases to disappear at 60 hpf (PubMed:14516702).</text>
</comment>
<comment type="domain">
    <text evidence="2">The DHHC domain is required for palmitoyltransferase activity.</text>
</comment>
<comment type="similarity">
    <text evidence="12">Belongs to the DHHC palmitoyltransferase family. ERF2/ZDHHC9 subfamily.</text>
</comment>
<proteinExistence type="evidence at transcript level"/>
<organism>
    <name type="scientific">Danio rerio</name>
    <name type="common">Zebrafish</name>
    <name type="synonym">Brachydanio rerio</name>
    <dbReference type="NCBI Taxonomy" id="7955"/>
    <lineage>
        <taxon>Eukaryota</taxon>
        <taxon>Metazoa</taxon>
        <taxon>Chordata</taxon>
        <taxon>Craniata</taxon>
        <taxon>Vertebrata</taxon>
        <taxon>Euteleostomi</taxon>
        <taxon>Actinopterygii</taxon>
        <taxon>Neopterygii</taxon>
        <taxon>Teleostei</taxon>
        <taxon>Ostariophysi</taxon>
        <taxon>Cypriniformes</taxon>
        <taxon>Danionidae</taxon>
        <taxon>Danioninae</taxon>
        <taxon>Danio</taxon>
    </lineage>
</organism>
<gene>
    <name evidence="13" type="primary">zdhhc8b</name>
    <name evidence="11" type="synonym">dhhc8</name>
    <name evidence="10" type="synonym">zisp</name>
</gene>
<protein>
    <recommendedName>
        <fullName evidence="12">Palmitoyltransferase ZDHHC8B</fullName>
        <ecNumber evidence="3">2.3.1.225</ecNumber>
    </recommendedName>
    <alternativeName>
        <fullName evidence="13">Zinc finger DHHC domain-containing protein 8B</fullName>
    </alternativeName>
</protein>
<accession>A2CEX1</accession>
<accession>Q7ZU06</accession>
<accession>Q8AYN4</accession>
<dbReference type="EC" id="2.3.1.225" evidence="3"/>
<dbReference type="EMBL" id="AB085761">
    <property type="protein sequence ID" value="BAC24796.1"/>
    <property type="molecule type" value="mRNA"/>
</dbReference>
<dbReference type="EMBL" id="AY871211">
    <property type="protein sequence ID" value="AAX68544.1"/>
    <property type="molecule type" value="mRNA"/>
</dbReference>
<dbReference type="EMBL" id="CR774200">
    <property type="status" value="NOT_ANNOTATED_CDS"/>
    <property type="molecule type" value="Genomic_DNA"/>
</dbReference>
<dbReference type="EMBL" id="CR790378">
    <property type="status" value="NOT_ANNOTATED_CDS"/>
    <property type="molecule type" value="Genomic_DNA"/>
</dbReference>
<dbReference type="EMBL" id="BC049439">
    <property type="protein sequence ID" value="AAH49439.1"/>
    <property type="molecule type" value="mRNA"/>
</dbReference>
<dbReference type="RefSeq" id="NP_840089.2">
    <property type="nucleotide sequence ID" value="NM_178304.3"/>
</dbReference>
<dbReference type="SMR" id="A2CEX1"/>
<dbReference type="FunCoup" id="A2CEX1">
    <property type="interactions" value="1013"/>
</dbReference>
<dbReference type="STRING" id="7955.ENSDARP00000108476"/>
<dbReference type="PaxDb" id="7955-ENSDARP00000108476"/>
<dbReference type="Ensembl" id="ENSDART00000129878">
    <property type="protein sequence ID" value="ENSDARP00000108476"/>
    <property type="gene ID" value="ENSDARG00000018508"/>
</dbReference>
<dbReference type="GeneID" id="352941"/>
<dbReference type="KEGG" id="dre:352941"/>
<dbReference type="AGR" id="ZFIN:ZDB-GENE-030407-3"/>
<dbReference type="CTD" id="352941"/>
<dbReference type="ZFIN" id="ZDB-GENE-030407-3">
    <property type="gene designation" value="zdhhc8b"/>
</dbReference>
<dbReference type="eggNOG" id="KOG1311">
    <property type="taxonomic scope" value="Eukaryota"/>
</dbReference>
<dbReference type="HOGENOM" id="CLU_013779_0_0_1"/>
<dbReference type="InParanoid" id="A2CEX1"/>
<dbReference type="OMA" id="CIAHAAV"/>
<dbReference type="OrthoDB" id="4096362at2759"/>
<dbReference type="PhylomeDB" id="A2CEX1"/>
<dbReference type="TreeFam" id="TF354263"/>
<dbReference type="Reactome" id="R-DRE-8963896">
    <property type="pathway name" value="HDL assembly"/>
</dbReference>
<dbReference type="PRO" id="PR:A2CEX1"/>
<dbReference type="Proteomes" id="UP000000437">
    <property type="component" value="Chromosome 5"/>
</dbReference>
<dbReference type="Bgee" id="ENSDARG00000018508">
    <property type="expression patterns" value="Expressed in somite and 37 other cell types or tissues"/>
</dbReference>
<dbReference type="GO" id="GO:0005794">
    <property type="term" value="C:Golgi apparatus"/>
    <property type="evidence" value="ECO:0000318"/>
    <property type="project" value="GO_Central"/>
</dbReference>
<dbReference type="GO" id="GO:0000139">
    <property type="term" value="C:Golgi membrane"/>
    <property type="evidence" value="ECO:0007669"/>
    <property type="project" value="UniProtKB-SubCell"/>
</dbReference>
<dbReference type="GO" id="GO:0031966">
    <property type="term" value="C:mitochondrial membrane"/>
    <property type="evidence" value="ECO:0007669"/>
    <property type="project" value="UniProtKB-SubCell"/>
</dbReference>
<dbReference type="GO" id="GO:0016409">
    <property type="term" value="F:palmitoyltransferase activity"/>
    <property type="evidence" value="ECO:0000318"/>
    <property type="project" value="GO_Central"/>
</dbReference>
<dbReference type="GO" id="GO:0019706">
    <property type="term" value="F:protein-cysteine S-palmitoyltransferase activity"/>
    <property type="evidence" value="ECO:0007669"/>
    <property type="project" value="UniProtKB-EC"/>
</dbReference>
<dbReference type="GO" id="GO:0018230">
    <property type="term" value="P:peptidyl-L-cysteine S-palmitoylation"/>
    <property type="evidence" value="ECO:0000250"/>
    <property type="project" value="UniProtKB"/>
</dbReference>
<dbReference type="GO" id="GO:0010875">
    <property type="term" value="P:positive regulation of cholesterol efflux"/>
    <property type="evidence" value="ECO:0000318"/>
    <property type="project" value="GO_Central"/>
</dbReference>
<dbReference type="InterPro" id="IPR001594">
    <property type="entry name" value="Palmitoyltrfase_DHHC"/>
</dbReference>
<dbReference type="PANTHER" id="PTHR12349">
    <property type="entry name" value="ANKYRIN REPEAT AND LEM DOMAIN-CONTAINING PROTEIN 2"/>
    <property type="match status" value="1"/>
</dbReference>
<dbReference type="PANTHER" id="PTHR12349:SF1">
    <property type="entry name" value="PALMITOYLTRANSFERASE ZDHHC8"/>
    <property type="match status" value="1"/>
</dbReference>
<dbReference type="Pfam" id="PF01529">
    <property type="entry name" value="DHHC"/>
    <property type="match status" value="1"/>
</dbReference>
<dbReference type="PROSITE" id="PS50216">
    <property type="entry name" value="DHHC"/>
    <property type="match status" value="1"/>
</dbReference>
<evidence type="ECO:0000250" key="1">
    <source>
        <dbReference type="UniProtKB" id="Q5Y5T5"/>
    </source>
</evidence>
<evidence type="ECO:0000250" key="2">
    <source>
        <dbReference type="UniProtKB" id="Q8IUH5"/>
    </source>
</evidence>
<evidence type="ECO:0000250" key="3">
    <source>
        <dbReference type="UniProtKB" id="Q9ULC8"/>
    </source>
</evidence>
<evidence type="ECO:0000255" key="4"/>
<evidence type="ECO:0000255" key="5">
    <source>
        <dbReference type="PROSITE-ProRule" id="PRU00067"/>
    </source>
</evidence>
<evidence type="ECO:0000256" key="6">
    <source>
        <dbReference type="SAM" id="MobiDB-lite"/>
    </source>
</evidence>
<evidence type="ECO:0000269" key="7">
    <source>
    </source>
</evidence>
<evidence type="ECO:0000269" key="8">
    <source>
    </source>
</evidence>
<evidence type="ECO:0000269" key="9">
    <source>
    </source>
</evidence>
<evidence type="ECO:0000303" key="10">
    <source>
    </source>
</evidence>
<evidence type="ECO:0000303" key="11">
    <source>
    </source>
</evidence>
<evidence type="ECO:0000305" key="12"/>
<evidence type="ECO:0000312" key="13">
    <source>
        <dbReference type="ZFIN" id="ZDB-GENE-030407-3"/>
    </source>
</evidence>
<name>ZDH8B_DANRE</name>